<name>YBZG_BACSU</name>
<gene>
    <name type="primary">ybzG</name>
    <name type="ordered locus">BSU01389</name>
</gene>
<sequence>MIGQKAWVNIGKTEFILLLVVGILTIINVLTADGEKRTFHSPKKKNINHLTLYDCVSPEVQNSINETGRVTNFF</sequence>
<dbReference type="EMBL" id="AL009126">
    <property type="protein sequence ID" value="CAX52539.1"/>
    <property type="molecule type" value="Genomic_DNA"/>
</dbReference>
<dbReference type="RefSeq" id="WP_009969230.1">
    <property type="nucleotide sequence ID" value="NC_000964.3"/>
</dbReference>
<dbReference type="RefSeq" id="YP_003097669.1">
    <property type="nucleotide sequence ID" value="NC_000964.3"/>
</dbReference>
<dbReference type="SMR" id="C0H3S8"/>
<dbReference type="FunCoup" id="C0H3S8">
    <property type="interactions" value="35"/>
</dbReference>
<dbReference type="STRING" id="224308.BSU01389"/>
<dbReference type="PaxDb" id="224308-BSU01389"/>
<dbReference type="EnsemblBacteria" id="CAX52539">
    <property type="protein sequence ID" value="CAX52539"/>
    <property type="gene ID" value="BSU_01389"/>
</dbReference>
<dbReference type="GeneID" id="8303095"/>
<dbReference type="KEGG" id="bsu:BSU01389"/>
<dbReference type="PATRIC" id="fig|224308.179.peg.142"/>
<dbReference type="eggNOG" id="COG2163">
    <property type="taxonomic scope" value="Bacteria"/>
</dbReference>
<dbReference type="InParanoid" id="C0H3S8"/>
<dbReference type="OrthoDB" id="5244at2"/>
<dbReference type="BioCyc" id="BSUB:BSU01389-MONOMER"/>
<dbReference type="Proteomes" id="UP000001570">
    <property type="component" value="Chromosome"/>
</dbReference>
<accession>C0H3S8</accession>
<keyword id="KW-1185">Reference proteome</keyword>
<organism>
    <name type="scientific">Bacillus subtilis (strain 168)</name>
    <dbReference type="NCBI Taxonomy" id="224308"/>
    <lineage>
        <taxon>Bacteria</taxon>
        <taxon>Bacillati</taxon>
        <taxon>Bacillota</taxon>
        <taxon>Bacilli</taxon>
        <taxon>Bacillales</taxon>
        <taxon>Bacillaceae</taxon>
        <taxon>Bacillus</taxon>
    </lineage>
</organism>
<feature type="chain" id="PRO_0000378091" description="Putative ribosome-binding protein YbzG">
    <location>
        <begin position="1"/>
        <end position="74"/>
    </location>
</feature>
<reference key="1">
    <citation type="journal article" date="1997" name="Nature">
        <title>The complete genome sequence of the Gram-positive bacterium Bacillus subtilis.</title>
        <authorList>
            <person name="Kunst F."/>
            <person name="Ogasawara N."/>
            <person name="Moszer I."/>
            <person name="Albertini A.M."/>
            <person name="Alloni G."/>
            <person name="Azevedo V."/>
            <person name="Bertero M.G."/>
            <person name="Bessieres P."/>
            <person name="Bolotin A."/>
            <person name="Borchert S."/>
            <person name="Borriss R."/>
            <person name="Boursier L."/>
            <person name="Brans A."/>
            <person name="Braun M."/>
            <person name="Brignell S.C."/>
            <person name="Bron S."/>
            <person name="Brouillet S."/>
            <person name="Bruschi C.V."/>
            <person name="Caldwell B."/>
            <person name="Capuano V."/>
            <person name="Carter N.M."/>
            <person name="Choi S.-K."/>
            <person name="Codani J.-J."/>
            <person name="Connerton I.F."/>
            <person name="Cummings N.J."/>
            <person name="Daniel R.A."/>
            <person name="Denizot F."/>
            <person name="Devine K.M."/>
            <person name="Duesterhoeft A."/>
            <person name="Ehrlich S.D."/>
            <person name="Emmerson P.T."/>
            <person name="Entian K.-D."/>
            <person name="Errington J."/>
            <person name="Fabret C."/>
            <person name="Ferrari E."/>
            <person name="Foulger D."/>
            <person name="Fritz C."/>
            <person name="Fujita M."/>
            <person name="Fujita Y."/>
            <person name="Fuma S."/>
            <person name="Galizzi A."/>
            <person name="Galleron N."/>
            <person name="Ghim S.-Y."/>
            <person name="Glaser P."/>
            <person name="Goffeau A."/>
            <person name="Golightly E.J."/>
            <person name="Grandi G."/>
            <person name="Guiseppi G."/>
            <person name="Guy B.J."/>
            <person name="Haga K."/>
            <person name="Haiech J."/>
            <person name="Harwood C.R."/>
            <person name="Henaut A."/>
            <person name="Hilbert H."/>
            <person name="Holsappel S."/>
            <person name="Hosono S."/>
            <person name="Hullo M.-F."/>
            <person name="Itaya M."/>
            <person name="Jones L.-M."/>
            <person name="Joris B."/>
            <person name="Karamata D."/>
            <person name="Kasahara Y."/>
            <person name="Klaerr-Blanchard M."/>
            <person name="Klein C."/>
            <person name="Kobayashi Y."/>
            <person name="Koetter P."/>
            <person name="Koningstein G."/>
            <person name="Krogh S."/>
            <person name="Kumano M."/>
            <person name="Kurita K."/>
            <person name="Lapidus A."/>
            <person name="Lardinois S."/>
            <person name="Lauber J."/>
            <person name="Lazarevic V."/>
            <person name="Lee S.-M."/>
            <person name="Levine A."/>
            <person name="Liu H."/>
            <person name="Masuda S."/>
            <person name="Mauel C."/>
            <person name="Medigue C."/>
            <person name="Medina N."/>
            <person name="Mellado R.P."/>
            <person name="Mizuno M."/>
            <person name="Moestl D."/>
            <person name="Nakai S."/>
            <person name="Noback M."/>
            <person name="Noone D."/>
            <person name="O'Reilly M."/>
            <person name="Ogawa K."/>
            <person name="Ogiwara A."/>
            <person name="Oudega B."/>
            <person name="Park S.-H."/>
            <person name="Parro V."/>
            <person name="Pohl T.M."/>
            <person name="Portetelle D."/>
            <person name="Porwollik S."/>
            <person name="Prescott A.M."/>
            <person name="Presecan E."/>
            <person name="Pujic P."/>
            <person name="Purnelle B."/>
            <person name="Rapoport G."/>
            <person name="Rey M."/>
            <person name="Reynolds S."/>
            <person name="Rieger M."/>
            <person name="Rivolta C."/>
            <person name="Rocha E."/>
            <person name="Roche B."/>
            <person name="Rose M."/>
            <person name="Sadaie Y."/>
            <person name="Sato T."/>
            <person name="Scanlan E."/>
            <person name="Schleich S."/>
            <person name="Schroeter R."/>
            <person name="Scoffone F."/>
            <person name="Sekiguchi J."/>
            <person name="Sekowska A."/>
            <person name="Seror S.J."/>
            <person name="Serror P."/>
            <person name="Shin B.-S."/>
            <person name="Soldo B."/>
            <person name="Sorokin A."/>
            <person name="Tacconi E."/>
            <person name="Takagi T."/>
            <person name="Takahashi H."/>
            <person name="Takemaru K."/>
            <person name="Takeuchi M."/>
            <person name="Tamakoshi A."/>
            <person name="Tanaka T."/>
            <person name="Terpstra P."/>
            <person name="Tognoni A."/>
            <person name="Tosato V."/>
            <person name="Uchiyama S."/>
            <person name="Vandenbol M."/>
            <person name="Vannier F."/>
            <person name="Vassarotti A."/>
            <person name="Viari A."/>
            <person name="Wambutt R."/>
            <person name="Wedler E."/>
            <person name="Wedler H."/>
            <person name="Weitzenegger T."/>
            <person name="Winters P."/>
            <person name="Wipat A."/>
            <person name="Yamamoto H."/>
            <person name="Yamane K."/>
            <person name="Yasumoto K."/>
            <person name="Yata K."/>
            <person name="Yoshida K."/>
            <person name="Yoshikawa H.-F."/>
            <person name="Zumstein E."/>
            <person name="Yoshikawa H."/>
            <person name="Danchin A."/>
        </authorList>
    </citation>
    <scope>NUCLEOTIDE SEQUENCE [LARGE SCALE GENOMIC DNA]</scope>
    <source>
        <strain>168</strain>
    </source>
</reference>
<reference key="2">
    <citation type="journal article" date="2009" name="Microbiology">
        <title>From a consortium sequence to a unified sequence: the Bacillus subtilis 168 reference genome a decade later.</title>
        <authorList>
            <person name="Barbe V."/>
            <person name="Cruveiller S."/>
            <person name="Kunst F."/>
            <person name="Lenoble P."/>
            <person name="Meurice G."/>
            <person name="Sekowska A."/>
            <person name="Vallenet D."/>
            <person name="Wang T."/>
            <person name="Moszer I."/>
            <person name="Medigue C."/>
            <person name="Danchin A."/>
        </authorList>
    </citation>
    <scope>IDENTIFICATION</scope>
</reference>
<protein>
    <recommendedName>
        <fullName>Putative ribosome-binding protein YbzG</fullName>
    </recommendedName>
</protein>
<proteinExistence type="predicted"/>